<comment type="function">
    <text evidence="1">Secreted metalloproteinase probably acting as a virulence factor.</text>
</comment>
<comment type="cofactor">
    <cofactor evidence="1">
        <name>Zn(2+)</name>
        <dbReference type="ChEBI" id="CHEBI:29105"/>
    </cofactor>
    <text evidence="1">Binds 1 zinc ion per subunit.</text>
</comment>
<comment type="subcellular location">
    <subcellularLocation>
        <location evidence="4">Secreted</location>
    </subcellularLocation>
</comment>
<comment type="similarity">
    <text evidence="5">Belongs to the peptidase M36 family.</text>
</comment>
<name>MEP3_TRIVO</name>
<accession>A1XIM2</accession>
<organism>
    <name type="scientific">Trichophyton violaceum</name>
    <dbReference type="NCBI Taxonomy" id="34388"/>
    <lineage>
        <taxon>Eukaryota</taxon>
        <taxon>Fungi</taxon>
        <taxon>Dikarya</taxon>
        <taxon>Ascomycota</taxon>
        <taxon>Pezizomycotina</taxon>
        <taxon>Eurotiomycetes</taxon>
        <taxon>Eurotiomycetidae</taxon>
        <taxon>Onygenales</taxon>
        <taxon>Arthrodermataceae</taxon>
        <taxon>Trichophyton</taxon>
    </lineage>
</organism>
<feature type="propeptide" id="PRO_0000380858" evidence="1">
    <location>
        <begin position="1" status="less than"/>
        <end position="9"/>
    </location>
</feature>
<feature type="chain" id="PRO_0000380859" description="Extracellular metalloproteinase 3">
    <location>
        <begin position="10"/>
        <end position="391" status="greater than"/>
    </location>
</feature>
<feature type="active site" evidence="3">
    <location>
        <position position="193"/>
    </location>
</feature>
<feature type="binding site" evidence="3">
    <location>
        <position position="192"/>
    </location>
    <ligand>
        <name>Zn(2+)</name>
        <dbReference type="ChEBI" id="CHEBI:29105"/>
        <note>catalytic</note>
    </ligand>
</feature>
<feature type="binding site" evidence="3">
    <location>
        <position position="196"/>
    </location>
    <ligand>
        <name>Zn(2+)</name>
        <dbReference type="ChEBI" id="CHEBI:29105"/>
        <note>catalytic</note>
    </ligand>
</feature>
<feature type="glycosylation site" description="N-linked (GlcNAc...) asparagine" evidence="2">
    <location>
        <position position="173"/>
    </location>
</feature>
<feature type="glycosylation site" description="N-linked (GlcNAc...) asparagine" evidence="2">
    <location>
        <position position="243"/>
    </location>
</feature>
<feature type="glycosylation site" description="N-linked (GlcNAc...) asparagine" evidence="2">
    <location>
        <position position="385"/>
    </location>
</feature>
<feature type="non-terminal residue">
    <location>
        <position position="1"/>
    </location>
</feature>
<feature type="non-terminal residue">
    <location>
        <position position="391"/>
    </location>
</feature>
<protein>
    <recommendedName>
        <fullName>Extracellular metalloproteinase 3</fullName>
        <ecNumber>3.4.24.-</ecNumber>
    </recommendedName>
    <alternativeName>
        <fullName>Fungalysin MEP3</fullName>
    </alternativeName>
</protein>
<reference key="1">
    <citation type="journal article" date="2007" name="FEMS Microbiol. Lett.">
        <title>Closely related dermatophyte species produce different patterns of secreted proteins.</title>
        <authorList>
            <person name="Giddey K."/>
            <person name="Favre B."/>
            <person name="Quadroni M."/>
            <person name="Monod M."/>
        </authorList>
    </citation>
    <scope>NUCLEOTIDE SEQUENCE [GENOMIC DNA]</scope>
    <scope>IDENTIFICATION BY MASS SPECTROMETRY</scope>
    <scope>SUBCELLULAR LOCATION</scope>
    <source>
        <strain>LAU 819</strain>
    </source>
</reference>
<dbReference type="EC" id="3.4.24.-"/>
<dbReference type="EMBL" id="DQ384952">
    <property type="protein sequence ID" value="ABL84987.1"/>
    <property type="molecule type" value="Genomic_DNA"/>
</dbReference>
<dbReference type="SMR" id="A1XIM2"/>
<dbReference type="MEROPS" id="M36.001"/>
<dbReference type="GlyCosmos" id="A1XIM2">
    <property type="glycosylation" value="3 sites, No reported glycans"/>
</dbReference>
<dbReference type="GO" id="GO:0005576">
    <property type="term" value="C:extracellular region"/>
    <property type="evidence" value="ECO:0007669"/>
    <property type="project" value="UniProtKB-SubCell"/>
</dbReference>
<dbReference type="GO" id="GO:0004222">
    <property type="term" value="F:metalloendopeptidase activity"/>
    <property type="evidence" value="ECO:0007669"/>
    <property type="project" value="InterPro"/>
</dbReference>
<dbReference type="GO" id="GO:0008270">
    <property type="term" value="F:zinc ion binding"/>
    <property type="evidence" value="ECO:0007669"/>
    <property type="project" value="InterPro"/>
</dbReference>
<dbReference type="GO" id="GO:0006508">
    <property type="term" value="P:proteolysis"/>
    <property type="evidence" value="ECO:0007669"/>
    <property type="project" value="UniProtKB-KW"/>
</dbReference>
<dbReference type="CDD" id="cd09596">
    <property type="entry name" value="M36"/>
    <property type="match status" value="1"/>
</dbReference>
<dbReference type="Gene3D" id="3.10.170.10">
    <property type="match status" value="1"/>
</dbReference>
<dbReference type="Gene3D" id="1.10.390.10">
    <property type="entry name" value="Neutral Protease Domain 2"/>
    <property type="match status" value="1"/>
</dbReference>
<dbReference type="InterPro" id="IPR050371">
    <property type="entry name" value="Fungal_virulence_M36"/>
</dbReference>
<dbReference type="InterPro" id="IPR001842">
    <property type="entry name" value="Peptidase_M36"/>
</dbReference>
<dbReference type="InterPro" id="IPR027268">
    <property type="entry name" value="Peptidase_M4/M1_CTD_sf"/>
</dbReference>
<dbReference type="PANTHER" id="PTHR33478">
    <property type="entry name" value="EXTRACELLULAR METALLOPROTEINASE MEP"/>
    <property type="match status" value="1"/>
</dbReference>
<dbReference type="PANTHER" id="PTHR33478:SF1">
    <property type="entry name" value="EXTRACELLULAR METALLOPROTEINASE MEP"/>
    <property type="match status" value="1"/>
</dbReference>
<dbReference type="Pfam" id="PF02128">
    <property type="entry name" value="Peptidase_M36"/>
    <property type="match status" value="1"/>
</dbReference>
<dbReference type="PRINTS" id="PR00999">
    <property type="entry name" value="FUNGALYSIN"/>
</dbReference>
<dbReference type="SUPFAM" id="SSF55486">
    <property type="entry name" value="Metalloproteases ('zincins'), catalytic domain"/>
    <property type="match status" value="1"/>
</dbReference>
<dbReference type="PROSITE" id="PS00142">
    <property type="entry name" value="ZINC_PROTEASE"/>
    <property type="match status" value="1"/>
</dbReference>
<proteinExistence type="evidence at protein level"/>
<keyword id="KW-0325">Glycoprotein</keyword>
<keyword id="KW-0378">Hydrolase</keyword>
<keyword id="KW-0479">Metal-binding</keyword>
<keyword id="KW-0482">Metalloprotease</keyword>
<keyword id="KW-0645">Protease</keyword>
<keyword id="KW-0964">Secreted</keyword>
<keyword id="KW-0843">Virulence</keyword>
<keyword id="KW-0862">Zinc</keyword>
<keyword id="KW-0865">Zymogen</keyword>
<sequence>HNVVDYVASAEYKVFAWGLNDPTEGNPTSIRDPWTDASPYTWNSDGMSKYPTTRGNNAIAQDNPTGGSTYINNYRPQSPNLIFSYPWSPTATPPSSYKDFSITQLFYTTNRYHDLLYSFGFNEAAGNFQVNNGNKGGKGNDFAIVNAQDGSGTNNANFATPPDGSPGRMRMYNWTTARPNRDGCLEAGIVIHEYTHGLSNRLCGGPANSACLNALESGGMGEGWGDFYATAIRLKPRDTKNTNYSMGAWAANNPKGIRAYLYSTNLQTNPYMYTSVNSLREVHQIGTVWASMLYDLMWALIEAHGGTYSANPVFRNGVPQDGRHLSMKLVMDGMALQPCNPNFVQARDAILDADRALTNSANKCTIWKAFAKRGLGYGAKYDARNRTGSNK</sequence>
<evidence type="ECO:0000250" key="1"/>
<evidence type="ECO:0000255" key="2"/>
<evidence type="ECO:0000255" key="3">
    <source>
        <dbReference type="PROSITE-ProRule" id="PRU10095"/>
    </source>
</evidence>
<evidence type="ECO:0000269" key="4">
    <source>
    </source>
</evidence>
<evidence type="ECO:0000305" key="5"/>
<gene>
    <name type="primary">MEP3</name>
</gene>